<name>Y3891_BRUSU</name>
<comment type="similarity">
    <text evidence="1">Belongs to the UPF0434 family.</text>
</comment>
<sequence>MDDKVETGNIDVRLLELLVCPLTKGPLEYDAERSELVSRKARLAYPVRGGIPIMLPSEARSLTE</sequence>
<evidence type="ECO:0000255" key="1">
    <source>
        <dbReference type="HAMAP-Rule" id="MF_01187"/>
    </source>
</evidence>
<organism>
    <name type="scientific">Brucella suis biovar 1 (strain 1330)</name>
    <dbReference type="NCBI Taxonomy" id="204722"/>
    <lineage>
        <taxon>Bacteria</taxon>
        <taxon>Pseudomonadati</taxon>
        <taxon>Pseudomonadota</taxon>
        <taxon>Alphaproteobacteria</taxon>
        <taxon>Hyphomicrobiales</taxon>
        <taxon>Brucellaceae</taxon>
        <taxon>Brucella/Ochrobactrum group</taxon>
        <taxon>Brucella</taxon>
    </lineage>
</organism>
<protein>
    <recommendedName>
        <fullName evidence="1">UPF0434 protein BRA0891/BS1330_II0884</fullName>
    </recommendedName>
</protein>
<dbReference type="EMBL" id="AE014292">
    <property type="protein sequence ID" value="AAN34063.1"/>
    <property type="molecule type" value="Genomic_DNA"/>
</dbReference>
<dbReference type="EMBL" id="CP002998">
    <property type="protein sequence ID" value="AEM20340.1"/>
    <property type="molecule type" value="Genomic_DNA"/>
</dbReference>
<dbReference type="PIR" id="AB3560">
    <property type="entry name" value="AB3560"/>
</dbReference>
<dbReference type="RefSeq" id="WP_002965755.1">
    <property type="nucleotide sequence ID" value="NZ_KN046805.1"/>
</dbReference>
<dbReference type="SMR" id="Q8FVF2"/>
<dbReference type="KEGG" id="bms:BRA0891"/>
<dbReference type="KEGG" id="bsi:BS1330_II0884"/>
<dbReference type="PATRIC" id="fig|204722.21.peg.412"/>
<dbReference type="HOGENOM" id="CLU_155659_2_2_5"/>
<dbReference type="Proteomes" id="UP000007104">
    <property type="component" value="Chromosome II"/>
</dbReference>
<dbReference type="GO" id="GO:0005829">
    <property type="term" value="C:cytosol"/>
    <property type="evidence" value="ECO:0007669"/>
    <property type="project" value="TreeGrafter"/>
</dbReference>
<dbReference type="FunFam" id="2.20.25.10:FF:000002">
    <property type="entry name" value="UPF0434 protein YcaR"/>
    <property type="match status" value="1"/>
</dbReference>
<dbReference type="Gene3D" id="2.20.25.10">
    <property type="match status" value="1"/>
</dbReference>
<dbReference type="HAMAP" id="MF_01187">
    <property type="entry name" value="UPF0434"/>
    <property type="match status" value="1"/>
</dbReference>
<dbReference type="InterPro" id="IPR005651">
    <property type="entry name" value="Trm112-like"/>
</dbReference>
<dbReference type="PANTHER" id="PTHR33505:SF4">
    <property type="entry name" value="PROTEIN PREY, MITOCHONDRIAL"/>
    <property type="match status" value="1"/>
</dbReference>
<dbReference type="PANTHER" id="PTHR33505">
    <property type="entry name" value="ZGC:162634"/>
    <property type="match status" value="1"/>
</dbReference>
<dbReference type="Pfam" id="PF03966">
    <property type="entry name" value="Trm112p"/>
    <property type="match status" value="1"/>
</dbReference>
<dbReference type="SUPFAM" id="SSF158997">
    <property type="entry name" value="Trm112p-like"/>
    <property type="match status" value="1"/>
</dbReference>
<feature type="chain" id="PRO_0000291070" description="UPF0434 protein BRA0891/BS1330_II0884">
    <location>
        <begin position="1"/>
        <end position="64"/>
    </location>
</feature>
<accession>Q8FVF2</accession>
<accession>G0KDQ2</accession>
<gene>
    <name type="ordered locus">BRA0891</name>
    <name type="ordered locus">BS1330_II0884</name>
</gene>
<reference key="1">
    <citation type="journal article" date="2002" name="Proc. Natl. Acad. Sci. U.S.A.">
        <title>The Brucella suis genome reveals fundamental similarities between animal and plant pathogens and symbionts.</title>
        <authorList>
            <person name="Paulsen I.T."/>
            <person name="Seshadri R."/>
            <person name="Nelson K.E."/>
            <person name="Eisen J.A."/>
            <person name="Heidelberg J.F."/>
            <person name="Read T.D."/>
            <person name="Dodson R.J."/>
            <person name="Umayam L.A."/>
            <person name="Brinkac L.M."/>
            <person name="Beanan M.J."/>
            <person name="Daugherty S.C."/>
            <person name="DeBoy R.T."/>
            <person name="Durkin A.S."/>
            <person name="Kolonay J.F."/>
            <person name="Madupu R."/>
            <person name="Nelson W.C."/>
            <person name="Ayodeji B."/>
            <person name="Kraul M."/>
            <person name="Shetty J."/>
            <person name="Malek J.A."/>
            <person name="Van Aken S.E."/>
            <person name="Riedmuller S."/>
            <person name="Tettelin H."/>
            <person name="Gill S.R."/>
            <person name="White O."/>
            <person name="Salzberg S.L."/>
            <person name="Hoover D.L."/>
            <person name="Lindler L.E."/>
            <person name="Halling S.M."/>
            <person name="Boyle S.M."/>
            <person name="Fraser C.M."/>
        </authorList>
    </citation>
    <scope>NUCLEOTIDE SEQUENCE [LARGE SCALE GENOMIC DNA]</scope>
    <source>
        <strain>1330</strain>
    </source>
</reference>
<reference key="2">
    <citation type="journal article" date="2011" name="J. Bacteriol.">
        <title>Revised genome sequence of Brucella suis 1330.</title>
        <authorList>
            <person name="Tae H."/>
            <person name="Shallom S."/>
            <person name="Settlage R."/>
            <person name="Preston D."/>
            <person name="Adams L.G."/>
            <person name="Garner H.R."/>
        </authorList>
    </citation>
    <scope>NUCLEOTIDE SEQUENCE [LARGE SCALE GENOMIC DNA]</scope>
    <source>
        <strain>1330</strain>
    </source>
</reference>
<proteinExistence type="inferred from homology"/>